<reference key="1">
    <citation type="journal article" date="2002" name="Proc. Natl. Acad. Sci. U.S.A.">
        <title>Genome sequence of a serotype M3 strain of group A Streptococcus: phage-encoded toxins, the high-virulence phenotype, and clone emergence.</title>
        <authorList>
            <person name="Beres S.B."/>
            <person name="Sylva G.L."/>
            <person name="Barbian K.D."/>
            <person name="Lei B."/>
            <person name="Hoff J.S."/>
            <person name="Mammarella N.D."/>
            <person name="Liu M.-Y."/>
            <person name="Smoot J.C."/>
            <person name="Porcella S.F."/>
            <person name="Parkins L.D."/>
            <person name="Campbell D.S."/>
            <person name="Smith T.M."/>
            <person name="McCormick J.K."/>
            <person name="Leung D.Y.M."/>
            <person name="Schlievert P.M."/>
            <person name="Musser J.M."/>
        </authorList>
    </citation>
    <scope>NUCLEOTIDE SEQUENCE [LARGE SCALE GENOMIC DNA]</scope>
    <source>
        <strain>ATCC BAA-595 / MGAS315</strain>
    </source>
</reference>
<comment type="similarity">
    <text evidence="2">Belongs to the class I-like SAM-binding methyltransferase superfamily. RNA M5U methyltransferase family.</text>
</comment>
<comment type="sequence caution" evidence="3">
    <conflict type="erroneous initiation">
        <sequence resource="EMBL-CDS" id="AAM79631"/>
    </conflict>
</comment>
<protein>
    <recommendedName>
        <fullName>Uncharacterized RNA methyltransferase SpyM3_1024</fullName>
        <ecNumber>2.1.1.-</ecNumber>
    </recommendedName>
</protein>
<organism>
    <name type="scientific">Streptococcus pyogenes serotype M3 (strain ATCC BAA-595 / MGAS315)</name>
    <dbReference type="NCBI Taxonomy" id="198466"/>
    <lineage>
        <taxon>Bacteria</taxon>
        <taxon>Bacillati</taxon>
        <taxon>Bacillota</taxon>
        <taxon>Bacilli</taxon>
        <taxon>Lactobacillales</taxon>
        <taxon>Streptococcaceae</taxon>
        <taxon>Streptococcus</taxon>
    </lineage>
</organism>
<name>Y1024_STRP3</name>
<accession>P0DG14</accession>
<accession>Q878W2</accession>
<accession>Q8K722</accession>
<gene>
    <name type="ordered locus">SpyM3_1024</name>
</gene>
<sequence length="462" mass="51751">MVSPRKGKRIRMLKKNDIIQVAISDLSHEGAGVAKHDGFVFFVDNALPEEVIDMRVLKVNKNSGFGKVEAYHYLSPARNADVNLTYLRTGIADLGHLTYEDQLTFKKKQVQDSLYKIAGISDVTVESTIGMTEPLAYRNKAQVPVRRVNGQLETGFFRKHSHDLIPISDYYIQDKEIDRLINFTRDLLRRFDIKPYDETEQTGLLRNIVVRRGHYSGEMMLVLVTTRPKVFRVDQVIEKIVEAFPAVVSIIQNINDKNTNAIFGKDFKTLYGKDTITDSMLGNNYAISAQSFYQVNTVMAEKLYQTAIAFSDLSKDDIVIDAYSGIGTIGLSFAKTVKAVYGVEVIEAAVRDAQHNAALNGITNAYFVADTAEHAMATWAKDGIKPSVILVDPPRKGLTESFIQASVAMGPQKITYVSCNPATMARDIKRYQELGYKLAKVQPVDLFPQTHHVECVVLLIKE</sequence>
<dbReference type="EC" id="2.1.1.-"/>
<dbReference type="EMBL" id="AE014074">
    <property type="protein sequence ID" value="AAM79631.1"/>
    <property type="status" value="ALT_INIT"/>
    <property type="molecule type" value="Genomic_DNA"/>
</dbReference>
<dbReference type="SMR" id="P0DG14"/>
<dbReference type="KEGG" id="spg:SpyM3_1024"/>
<dbReference type="HOGENOM" id="CLU_014689_7_2_9"/>
<dbReference type="Proteomes" id="UP000000564">
    <property type="component" value="Chromosome"/>
</dbReference>
<dbReference type="GO" id="GO:0070041">
    <property type="term" value="F:rRNA (uridine-C5-)-methyltransferase activity"/>
    <property type="evidence" value="ECO:0007669"/>
    <property type="project" value="TreeGrafter"/>
</dbReference>
<dbReference type="GO" id="GO:0070475">
    <property type="term" value="P:rRNA base methylation"/>
    <property type="evidence" value="ECO:0007669"/>
    <property type="project" value="TreeGrafter"/>
</dbReference>
<dbReference type="CDD" id="cd02440">
    <property type="entry name" value="AdoMet_MTases"/>
    <property type="match status" value="1"/>
</dbReference>
<dbReference type="FunFam" id="3.40.50.150:FF:000009">
    <property type="entry name" value="23S rRNA (Uracil(1939)-C(5))-methyltransferase RlmD"/>
    <property type="match status" value="1"/>
</dbReference>
<dbReference type="FunFam" id="2.40.50.1070:FF:000003">
    <property type="entry name" value="23S rRNA (Uracil-5-)-methyltransferase RumA"/>
    <property type="match status" value="1"/>
</dbReference>
<dbReference type="Gene3D" id="2.40.50.1070">
    <property type="match status" value="1"/>
</dbReference>
<dbReference type="Gene3D" id="2.40.50.140">
    <property type="entry name" value="Nucleic acid-binding proteins"/>
    <property type="match status" value="1"/>
</dbReference>
<dbReference type="Gene3D" id="3.40.50.150">
    <property type="entry name" value="Vaccinia Virus protein VP39"/>
    <property type="match status" value="1"/>
</dbReference>
<dbReference type="InterPro" id="IPR030390">
    <property type="entry name" value="MeTrfase_TrmA_AS"/>
</dbReference>
<dbReference type="InterPro" id="IPR030391">
    <property type="entry name" value="MeTrfase_TrmA_CS"/>
</dbReference>
<dbReference type="InterPro" id="IPR012340">
    <property type="entry name" value="NA-bd_OB-fold"/>
</dbReference>
<dbReference type="InterPro" id="IPR029063">
    <property type="entry name" value="SAM-dependent_MTases_sf"/>
</dbReference>
<dbReference type="InterPro" id="IPR002792">
    <property type="entry name" value="TRAM_dom"/>
</dbReference>
<dbReference type="InterPro" id="IPR010280">
    <property type="entry name" value="U5_MeTrfase_fam"/>
</dbReference>
<dbReference type="NCBIfam" id="TIGR00479">
    <property type="entry name" value="rumA"/>
    <property type="match status" value="1"/>
</dbReference>
<dbReference type="PANTHER" id="PTHR11061">
    <property type="entry name" value="RNA M5U METHYLTRANSFERASE"/>
    <property type="match status" value="1"/>
</dbReference>
<dbReference type="PANTHER" id="PTHR11061:SF30">
    <property type="entry name" value="TRNA (URACIL(54)-C(5))-METHYLTRANSFERASE"/>
    <property type="match status" value="1"/>
</dbReference>
<dbReference type="Pfam" id="PF01938">
    <property type="entry name" value="TRAM"/>
    <property type="match status" value="1"/>
</dbReference>
<dbReference type="Pfam" id="PF05958">
    <property type="entry name" value="tRNA_U5-meth_tr"/>
    <property type="match status" value="1"/>
</dbReference>
<dbReference type="SUPFAM" id="SSF50249">
    <property type="entry name" value="Nucleic acid-binding proteins"/>
    <property type="match status" value="1"/>
</dbReference>
<dbReference type="SUPFAM" id="SSF53335">
    <property type="entry name" value="S-adenosyl-L-methionine-dependent methyltransferases"/>
    <property type="match status" value="1"/>
</dbReference>
<dbReference type="PROSITE" id="PS51687">
    <property type="entry name" value="SAM_MT_RNA_M5U"/>
    <property type="match status" value="1"/>
</dbReference>
<dbReference type="PROSITE" id="PS50926">
    <property type="entry name" value="TRAM"/>
    <property type="match status" value="1"/>
</dbReference>
<dbReference type="PROSITE" id="PS01230">
    <property type="entry name" value="TRMA_1"/>
    <property type="match status" value="1"/>
</dbReference>
<dbReference type="PROSITE" id="PS01231">
    <property type="entry name" value="TRMA_2"/>
    <property type="match status" value="1"/>
</dbReference>
<feature type="chain" id="PRO_0000162037" description="Uncharacterized RNA methyltransferase SpyM3_1024">
    <location>
        <begin position="1"/>
        <end position="462"/>
    </location>
</feature>
<feature type="domain" description="TRAM" evidence="1">
    <location>
        <begin position="12"/>
        <end position="70"/>
    </location>
</feature>
<feature type="active site" description="Nucleophile" evidence="2">
    <location>
        <position position="419"/>
    </location>
</feature>
<feature type="binding site" evidence="2">
    <location>
        <position position="294"/>
    </location>
    <ligand>
        <name>S-adenosyl-L-methionine</name>
        <dbReference type="ChEBI" id="CHEBI:59789"/>
    </ligand>
</feature>
<feature type="binding site" evidence="2">
    <location>
        <position position="323"/>
    </location>
    <ligand>
        <name>S-adenosyl-L-methionine</name>
        <dbReference type="ChEBI" id="CHEBI:59789"/>
    </ligand>
</feature>
<feature type="binding site" evidence="2">
    <location>
        <position position="344"/>
    </location>
    <ligand>
        <name>S-adenosyl-L-methionine</name>
        <dbReference type="ChEBI" id="CHEBI:59789"/>
    </ligand>
</feature>
<feature type="binding site" evidence="2">
    <location>
        <position position="392"/>
    </location>
    <ligand>
        <name>S-adenosyl-L-methionine</name>
        <dbReference type="ChEBI" id="CHEBI:59789"/>
    </ligand>
</feature>
<proteinExistence type="inferred from homology"/>
<keyword id="KW-0489">Methyltransferase</keyword>
<keyword id="KW-0949">S-adenosyl-L-methionine</keyword>
<keyword id="KW-0808">Transferase</keyword>
<evidence type="ECO:0000255" key="1">
    <source>
        <dbReference type="PROSITE-ProRule" id="PRU00208"/>
    </source>
</evidence>
<evidence type="ECO:0000255" key="2">
    <source>
        <dbReference type="PROSITE-ProRule" id="PRU01024"/>
    </source>
</evidence>
<evidence type="ECO:0000305" key="3"/>